<dbReference type="EC" id="6.1.1.15" evidence="1"/>
<dbReference type="EMBL" id="AE000511">
    <property type="protein sequence ID" value="AAD07305.1"/>
    <property type="molecule type" value="Genomic_DNA"/>
</dbReference>
<dbReference type="PIR" id="F64549">
    <property type="entry name" value="F64549"/>
</dbReference>
<dbReference type="RefSeq" id="NP_207036.1">
    <property type="nucleotide sequence ID" value="NC_000915.1"/>
</dbReference>
<dbReference type="SMR" id="P56124"/>
<dbReference type="DIP" id="DIP-3265N"/>
<dbReference type="FunCoup" id="P56124">
    <property type="interactions" value="362"/>
</dbReference>
<dbReference type="IntAct" id="P56124">
    <property type="interactions" value="2"/>
</dbReference>
<dbReference type="MINT" id="P56124"/>
<dbReference type="STRING" id="85962.HP_0238"/>
<dbReference type="PaxDb" id="85962-C694_01200"/>
<dbReference type="EnsemblBacteria" id="AAD07305">
    <property type="protein sequence ID" value="AAD07305"/>
    <property type="gene ID" value="HP_0238"/>
</dbReference>
<dbReference type="KEGG" id="hpy:HP_0238"/>
<dbReference type="PATRIC" id="fig|85962.8.peg.249"/>
<dbReference type="eggNOG" id="COG0442">
    <property type="taxonomic scope" value="Bacteria"/>
</dbReference>
<dbReference type="InParanoid" id="P56124"/>
<dbReference type="OrthoDB" id="9809052at2"/>
<dbReference type="PhylomeDB" id="P56124"/>
<dbReference type="Proteomes" id="UP000000429">
    <property type="component" value="Chromosome"/>
</dbReference>
<dbReference type="GO" id="GO:0005829">
    <property type="term" value="C:cytosol"/>
    <property type="evidence" value="ECO:0000318"/>
    <property type="project" value="GO_Central"/>
</dbReference>
<dbReference type="GO" id="GO:0002161">
    <property type="term" value="F:aminoacyl-tRNA deacylase activity"/>
    <property type="evidence" value="ECO:0007669"/>
    <property type="project" value="InterPro"/>
</dbReference>
<dbReference type="GO" id="GO:0005524">
    <property type="term" value="F:ATP binding"/>
    <property type="evidence" value="ECO:0007669"/>
    <property type="project" value="UniProtKB-UniRule"/>
</dbReference>
<dbReference type="GO" id="GO:0004827">
    <property type="term" value="F:proline-tRNA ligase activity"/>
    <property type="evidence" value="ECO:0000318"/>
    <property type="project" value="GO_Central"/>
</dbReference>
<dbReference type="GO" id="GO:0006433">
    <property type="term" value="P:prolyl-tRNA aminoacylation"/>
    <property type="evidence" value="ECO:0000318"/>
    <property type="project" value="GO_Central"/>
</dbReference>
<dbReference type="CDD" id="cd04334">
    <property type="entry name" value="ProRS-INS"/>
    <property type="match status" value="1"/>
</dbReference>
<dbReference type="CDD" id="cd00861">
    <property type="entry name" value="ProRS_anticodon_short"/>
    <property type="match status" value="1"/>
</dbReference>
<dbReference type="CDD" id="cd00779">
    <property type="entry name" value="ProRS_core_prok"/>
    <property type="match status" value="1"/>
</dbReference>
<dbReference type="FunFam" id="3.30.930.10:FF:000065">
    <property type="entry name" value="Proline--tRNA ligase"/>
    <property type="match status" value="1"/>
</dbReference>
<dbReference type="FunFam" id="3.30.930.10:FF:000066">
    <property type="entry name" value="Proline--tRNA ligase"/>
    <property type="match status" value="1"/>
</dbReference>
<dbReference type="FunFam" id="3.40.50.800:FF:000051">
    <property type="entry name" value="Proline--tRNA ligase"/>
    <property type="match status" value="1"/>
</dbReference>
<dbReference type="Gene3D" id="3.40.50.800">
    <property type="entry name" value="Anticodon-binding domain"/>
    <property type="match status" value="1"/>
</dbReference>
<dbReference type="Gene3D" id="3.30.930.10">
    <property type="entry name" value="Bira Bifunctional Protein, Domain 2"/>
    <property type="match status" value="2"/>
</dbReference>
<dbReference type="HAMAP" id="MF_01569">
    <property type="entry name" value="Pro_tRNA_synth_type1"/>
    <property type="match status" value="1"/>
</dbReference>
<dbReference type="InterPro" id="IPR002314">
    <property type="entry name" value="aa-tRNA-synt_IIb"/>
</dbReference>
<dbReference type="InterPro" id="IPR006195">
    <property type="entry name" value="aa-tRNA-synth_II"/>
</dbReference>
<dbReference type="InterPro" id="IPR045864">
    <property type="entry name" value="aa-tRNA-synth_II/BPL/LPL"/>
</dbReference>
<dbReference type="InterPro" id="IPR004154">
    <property type="entry name" value="Anticodon-bd"/>
</dbReference>
<dbReference type="InterPro" id="IPR036621">
    <property type="entry name" value="Anticodon-bd_dom_sf"/>
</dbReference>
<dbReference type="InterPro" id="IPR002316">
    <property type="entry name" value="Pro-tRNA-ligase_IIa"/>
</dbReference>
<dbReference type="InterPro" id="IPR004500">
    <property type="entry name" value="Pro-tRNA-synth_IIa_bac-type"/>
</dbReference>
<dbReference type="InterPro" id="IPR023717">
    <property type="entry name" value="Pro-tRNA-Synthase_IIa_type1"/>
</dbReference>
<dbReference type="InterPro" id="IPR050062">
    <property type="entry name" value="Pro-tRNA_synthetase"/>
</dbReference>
<dbReference type="InterPro" id="IPR044140">
    <property type="entry name" value="ProRS_anticodon_short"/>
</dbReference>
<dbReference type="InterPro" id="IPR033730">
    <property type="entry name" value="ProRS_core_prok"/>
</dbReference>
<dbReference type="InterPro" id="IPR036754">
    <property type="entry name" value="YbaK/aa-tRNA-synt-asso_dom_sf"/>
</dbReference>
<dbReference type="InterPro" id="IPR007214">
    <property type="entry name" value="YbaK/aa-tRNA-synth-assoc-dom"/>
</dbReference>
<dbReference type="NCBIfam" id="NF006625">
    <property type="entry name" value="PRK09194.1"/>
    <property type="match status" value="1"/>
</dbReference>
<dbReference type="NCBIfam" id="TIGR00409">
    <property type="entry name" value="proS_fam_II"/>
    <property type="match status" value="1"/>
</dbReference>
<dbReference type="PANTHER" id="PTHR42753">
    <property type="entry name" value="MITOCHONDRIAL RIBOSOME PROTEIN L39/PROLYL-TRNA LIGASE FAMILY MEMBER"/>
    <property type="match status" value="1"/>
</dbReference>
<dbReference type="PANTHER" id="PTHR42753:SF2">
    <property type="entry name" value="PROLINE--TRNA LIGASE"/>
    <property type="match status" value="1"/>
</dbReference>
<dbReference type="Pfam" id="PF03129">
    <property type="entry name" value="HGTP_anticodon"/>
    <property type="match status" value="1"/>
</dbReference>
<dbReference type="Pfam" id="PF00587">
    <property type="entry name" value="tRNA-synt_2b"/>
    <property type="match status" value="2"/>
</dbReference>
<dbReference type="Pfam" id="PF04073">
    <property type="entry name" value="tRNA_edit"/>
    <property type="match status" value="1"/>
</dbReference>
<dbReference type="PRINTS" id="PR01046">
    <property type="entry name" value="TRNASYNTHPRO"/>
</dbReference>
<dbReference type="SUPFAM" id="SSF52954">
    <property type="entry name" value="Class II aaRS ABD-related"/>
    <property type="match status" value="1"/>
</dbReference>
<dbReference type="SUPFAM" id="SSF55681">
    <property type="entry name" value="Class II aaRS and biotin synthetases"/>
    <property type="match status" value="1"/>
</dbReference>
<dbReference type="SUPFAM" id="SSF55826">
    <property type="entry name" value="YbaK/ProRS associated domain"/>
    <property type="match status" value="1"/>
</dbReference>
<dbReference type="PROSITE" id="PS50862">
    <property type="entry name" value="AA_TRNA_LIGASE_II"/>
    <property type="match status" value="1"/>
</dbReference>
<organism>
    <name type="scientific">Helicobacter pylori (strain ATCC 700392 / 26695)</name>
    <name type="common">Campylobacter pylori</name>
    <dbReference type="NCBI Taxonomy" id="85962"/>
    <lineage>
        <taxon>Bacteria</taxon>
        <taxon>Pseudomonadati</taxon>
        <taxon>Campylobacterota</taxon>
        <taxon>Epsilonproteobacteria</taxon>
        <taxon>Campylobacterales</taxon>
        <taxon>Helicobacteraceae</taxon>
        <taxon>Helicobacter</taxon>
    </lineage>
</organism>
<keyword id="KW-0030">Aminoacyl-tRNA synthetase</keyword>
<keyword id="KW-0067">ATP-binding</keyword>
<keyword id="KW-0963">Cytoplasm</keyword>
<keyword id="KW-0436">Ligase</keyword>
<keyword id="KW-0547">Nucleotide-binding</keyword>
<keyword id="KW-0648">Protein biosynthesis</keyword>
<keyword id="KW-1185">Reference proteome</keyword>
<name>SYP_HELPY</name>
<sequence length="577" mass="65223">MLFSKLFAPTLKEPPKDAVLKSHKHLAQAGYIYQVGSGIYNFLPLAKKVLDKIENITHKRMQEHGAQNILMSFVVLASLWEKSGRLDKYGKELLVFKDRKDNDFVLSPTLEENITEIAANFIKSYKQLPVHLYQIHTKFRDEIRPRFGLVRAREFIMKDGYSFHEDAESLDKEFLNTQSAYKEILSDLGLDFRIVEADSGAIGGSKSREFVVLTECGEDTIVVCQNCDYAANIEIAKRSKRPEPLNVPKAQLAKFPTPNTTSAQSVAEFFKTEPYFVLKALVRKVIHKDKETLACFFVRGDDNLEEVKALNALNIIGANALELREASQKDLDNVGLIAGFIGPYGLKKHVSYIIFDEDLKEGDCLIAGANEKDFHAVGVDLKGFENLVYADIVQVKESDRCPNCQGALKYHKSLEVGHIFKLGQGYAKSLKASFLDKNGKEQFFEMGCYGIGISRLLSAILEQKSDDLGCVWTKNTAPFDVVIVVSNWKDEAQKKLAFEVYERLLQKGVDALLDDRDARFGAKMRDFELIGERLALIIGKQTLESKEFECIKRANLEKQTIKDIELEEKILEMLESE</sequence>
<evidence type="ECO:0000255" key="1">
    <source>
        <dbReference type="HAMAP-Rule" id="MF_01569"/>
    </source>
</evidence>
<accession>P56124</accession>
<comment type="function">
    <text evidence="1">Catalyzes the attachment of proline to tRNA(Pro) in a two-step reaction: proline is first activated by ATP to form Pro-AMP and then transferred to the acceptor end of tRNA(Pro). As ProRS can inadvertently accommodate and process non-cognate amino acids such as alanine and cysteine, to avoid such errors it has two additional distinct editing activities against alanine. One activity is designated as 'pretransfer' editing and involves the tRNA(Pro)-independent hydrolysis of activated Ala-AMP. The other activity is designated 'posttransfer' editing and involves deacylation of mischarged Ala-tRNA(Pro). The misacylated Cys-tRNA(Pro) is not edited by ProRS.</text>
</comment>
<comment type="catalytic activity">
    <reaction evidence="1">
        <text>tRNA(Pro) + L-proline + ATP = L-prolyl-tRNA(Pro) + AMP + diphosphate</text>
        <dbReference type="Rhea" id="RHEA:14305"/>
        <dbReference type="Rhea" id="RHEA-COMP:9700"/>
        <dbReference type="Rhea" id="RHEA-COMP:9702"/>
        <dbReference type="ChEBI" id="CHEBI:30616"/>
        <dbReference type="ChEBI" id="CHEBI:33019"/>
        <dbReference type="ChEBI" id="CHEBI:60039"/>
        <dbReference type="ChEBI" id="CHEBI:78442"/>
        <dbReference type="ChEBI" id="CHEBI:78532"/>
        <dbReference type="ChEBI" id="CHEBI:456215"/>
        <dbReference type="EC" id="6.1.1.15"/>
    </reaction>
</comment>
<comment type="subunit">
    <text evidence="1">Homodimer.</text>
</comment>
<comment type="subcellular location">
    <subcellularLocation>
        <location evidence="1">Cytoplasm</location>
    </subcellularLocation>
</comment>
<comment type="domain">
    <text evidence="1">Consists of three domains: the N-terminal catalytic domain, the editing domain and the C-terminal anticodon-binding domain.</text>
</comment>
<comment type="similarity">
    <text evidence="1">Belongs to the class-II aminoacyl-tRNA synthetase family. ProS type 1 subfamily.</text>
</comment>
<protein>
    <recommendedName>
        <fullName evidence="1">Proline--tRNA ligase</fullName>
        <ecNumber evidence="1">6.1.1.15</ecNumber>
    </recommendedName>
    <alternativeName>
        <fullName evidence="1">Prolyl-tRNA synthetase</fullName>
        <shortName evidence="1">ProRS</shortName>
    </alternativeName>
</protein>
<reference key="1">
    <citation type="journal article" date="1997" name="Nature">
        <title>The complete genome sequence of the gastric pathogen Helicobacter pylori.</title>
        <authorList>
            <person name="Tomb J.-F."/>
            <person name="White O."/>
            <person name="Kerlavage A.R."/>
            <person name="Clayton R.A."/>
            <person name="Sutton G.G."/>
            <person name="Fleischmann R.D."/>
            <person name="Ketchum K.A."/>
            <person name="Klenk H.-P."/>
            <person name="Gill S.R."/>
            <person name="Dougherty B.A."/>
            <person name="Nelson K.E."/>
            <person name="Quackenbush J."/>
            <person name="Zhou L."/>
            <person name="Kirkness E.F."/>
            <person name="Peterson S.N."/>
            <person name="Loftus B.J."/>
            <person name="Richardson D.L."/>
            <person name="Dodson R.J."/>
            <person name="Khalak H.G."/>
            <person name="Glodek A."/>
            <person name="McKenney K."/>
            <person name="FitzGerald L.M."/>
            <person name="Lee N."/>
            <person name="Adams M.D."/>
            <person name="Hickey E.K."/>
            <person name="Berg D.E."/>
            <person name="Gocayne J.D."/>
            <person name="Utterback T.R."/>
            <person name="Peterson J.D."/>
            <person name="Kelley J.M."/>
            <person name="Cotton M.D."/>
            <person name="Weidman J.F."/>
            <person name="Fujii C."/>
            <person name="Bowman C."/>
            <person name="Watthey L."/>
            <person name="Wallin E."/>
            <person name="Hayes W.S."/>
            <person name="Borodovsky M."/>
            <person name="Karp P.D."/>
            <person name="Smith H.O."/>
            <person name="Fraser C.M."/>
            <person name="Venter J.C."/>
        </authorList>
    </citation>
    <scope>NUCLEOTIDE SEQUENCE [LARGE SCALE GENOMIC DNA]</scope>
    <source>
        <strain>ATCC 700392 / 26695</strain>
    </source>
</reference>
<gene>
    <name evidence="1" type="primary">proS</name>
    <name type="ordered locus">HP_0238</name>
</gene>
<feature type="chain" id="PRO_0000139331" description="Proline--tRNA ligase">
    <location>
        <begin position="1"/>
        <end position="577"/>
    </location>
</feature>
<proteinExistence type="inferred from homology"/>